<organism>
    <name type="scientific">Polynucleobacter necessarius subsp. necessarius (strain STIR1)</name>
    <dbReference type="NCBI Taxonomy" id="452638"/>
    <lineage>
        <taxon>Bacteria</taxon>
        <taxon>Pseudomonadati</taxon>
        <taxon>Pseudomonadota</taxon>
        <taxon>Betaproteobacteria</taxon>
        <taxon>Burkholderiales</taxon>
        <taxon>Burkholderiaceae</taxon>
        <taxon>Polynucleobacter</taxon>
    </lineage>
</organism>
<proteinExistence type="inferred from homology"/>
<keyword id="KW-0488">Methylation</keyword>
<keyword id="KW-0687">Ribonucleoprotein</keyword>
<keyword id="KW-0689">Ribosomal protein</keyword>
<keyword id="KW-0694">RNA-binding</keyword>
<keyword id="KW-0699">rRNA-binding</keyword>
<evidence type="ECO:0000255" key="1">
    <source>
        <dbReference type="HAMAP-Rule" id="MF_00736"/>
    </source>
</evidence>
<evidence type="ECO:0000305" key="2"/>
<protein>
    <recommendedName>
        <fullName evidence="1">Large ribosomal subunit protein uL11</fullName>
    </recommendedName>
    <alternativeName>
        <fullName evidence="2">50S ribosomal protein L11</fullName>
    </alternativeName>
</protein>
<name>RL11_POLNS</name>
<reference key="1">
    <citation type="journal article" date="2013" name="Proc. Natl. Acad. Sci. U.S.A.">
        <title>Polynucleobacter necessarius, a model for genome reduction in both free-living and symbiotic bacteria.</title>
        <authorList>
            <person name="Boscaro V."/>
            <person name="Felletti M."/>
            <person name="Vannini C."/>
            <person name="Ackerman M.S."/>
            <person name="Chain P.S."/>
            <person name="Malfatti S."/>
            <person name="Vergez L.M."/>
            <person name="Shin M."/>
            <person name="Doak T.G."/>
            <person name="Lynch M."/>
            <person name="Petroni G."/>
        </authorList>
    </citation>
    <scope>NUCLEOTIDE SEQUENCE [LARGE SCALE GENOMIC DNA]</scope>
    <source>
        <strain>STIR1</strain>
    </source>
</reference>
<comment type="function">
    <text evidence="1">Forms part of the ribosomal stalk which helps the ribosome interact with GTP-bound translation factors.</text>
</comment>
<comment type="subunit">
    <text evidence="1">Part of the ribosomal stalk of the 50S ribosomal subunit. Interacts with L10 and the large rRNA to form the base of the stalk. L10 forms an elongated spine to which L12 dimers bind in a sequential fashion forming a multimeric L10(L12)X complex.</text>
</comment>
<comment type="PTM">
    <text evidence="1">One or more lysine residues are methylated.</text>
</comment>
<comment type="similarity">
    <text evidence="1">Belongs to the universal ribosomal protein uL11 family.</text>
</comment>
<feature type="chain" id="PRO_1000195689" description="Large ribosomal subunit protein uL11">
    <location>
        <begin position="1"/>
        <end position="143"/>
    </location>
</feature>
<sequence>MAKKIIGFIKLQIPAGKANPSPPVGPALGQRGLNIMEFCKAFNAQTQSMEPGLPIPVVITAFADKSFTFIMKTPPTTIMIKKAAKIEKGSPRPHTDKVGSITRAQAEEIAKAKMPDLTAADMDAAVRTIAGSARSMGITVEGF</sequence>
<accession>B1XSE8</accession>
<gene>
    <name evidence="1" type="primary">rplK</name>
    <name type="ordered locus">Pnec_0038</name>
</gene>
<dbReference type="EMBL" id="CP001010">
    <property type="protein sequence ID" value="ACB43366.1"/>
    <property type="molecule type" value="Genomic_DNA"/>
</dbReference>
<dbReference type="SMR" id="B1XSE8"/>
<dbReference type="STRING" id="452638.Pnec_0038"/>
<dbReference type="KEGG" id="pne:Pnec_0038"/>
<dbReference type="eggNOG" id="COG0080">
    <property type="taxonomic scope" value="Bacteria"/>
</dbReference>
<dbReference type="HOGENOM" id="CLU_074237_2_0_4"/>
<dbReference type="OrthoDB" id="9802408at2"/>
<dbReference type="GO" id="GO:0022625">
    <property type="term" value="C:cytosolic large ribosomal subunit"/>
    <property type="evidence" value="ECO:0007669"/>
    <property type="project" value="TreeGrafter"/>
</dbReference>
<dbReference type="GO" id="GO:0070180">
    <property type="term" value="F:large ribosomal subunit rRNA binding"/>
    <property type="evidence" value="ECO:0007669"/>
    <property type="project" value="UniProtKB-UniRule"/>
</dbReference>
<dbReference type="GO" id="GO:0003735">
    <property type="term" value="F:structural constituent of ribosome"/>
    <property type="evidence" value="ECO:0007669"/>
    <property type="project" value="InterPro"/>
</dbReference>
<dbReference type="GO" id="GO:0006412">
    <property type="term" value="P:translation"/>
    <property type="evidence" value="ECO:0007669"/>
    <property type="project" value="UniProtKB-UniRule"/>
</dbReference>
<dbReference type="CDD" id="cd00349">
    <property type="entry name" value="Ribosomal_L11"/>
    <property type="match status" value="1"/>
</dbReference>
<dbReference type="FunFam" id="1.10.10.250:FF:000001">
    <property type="entry name" value="50S ribosomal protein L11"/>
    <property type="match status" value="1"/>
</dbReference>
<dbReference type="FunFam" id="3.30.1550.10:FF:000001">
    <property type="entry name" value="50S ribosomal protein L11"/>
    <property type="match status" value="1"/>
</dbReference>
<dbReference type="Gene3D" id="1.10.10.250">
    <property type="entry name" value="Ribosomal protein L11, C-terminal domain"/>
    <property type="match status" value="1"/>
</dbReference>
<dbReference type="Gene3D" id="3.30.1550.10">
    <property type="entry name" value="Ribosomal protein L11/L12, N-terminal domain"/>
    <property type="match status" value="1"/>
</dbReference>
<dbReference type="HAMAP" id="MF_00736">
    <property type="entry name" value="Ribosomal_uL11"/>
    <property type="match status" value="1"/>
</dbReference>
<dbReference type="InterPro" id="IPR000911">
    <property type="entry name" value="Ribosomal_uL11"/>
</dbReference>
<dbReference type="InterPro" id="IPR006519">
    <property type="entry name" value="Ribosomal_uL11_bac-typ"/>
</dbReference>
<dbReference type="InterPro" id="IPR020783">
    <property type="entry name" value="Ribosomal_uL11_C"/>
</dbReference>
<dbReference type="InterPro" id="IPR036769">
    <property type="entry name" value="Ribosomal_uL11_C_sf"/>
</dbReference>
<dbReference type="InterPro" id="IPR020785">
    <property type="entry name" value="Ribosomal_uL11_CS"/>
</dbReference>
<dbReference type="InterPro" id="IPR020784">
    <property type="entry name" value="Ribosomal_uL11_N"/>
</dbReference>
<dbReference type="InterPro" id="IPR036796">
    <property type="entry name" value="Ribosomal_uL11_N_sf"/>
</dbReference>
<dbReference type="NCBIfam" id="TIGR01632">
    <property type="entry name" value="L11_bact"/>
    <property type="match status" value="1"/>
</dbReference>
<dbReference type="PANTHER" id="PTHR11661">
    <property type="entry name" value="60S RIBOSOMAL PROTEIN L12"/>
    <property type="match status" value="1"/>
</dbReference>
<dbReference type="PANTHER" id="PTHR11661:SF1">
    <property type="entry name" value="LARGE RIBOSOMAL SUBUNIT PROTEIN UL11M"/>
    <property type="match status" value="1"/>
</dbReference>
<dbReference type="Pfam" id="PF00298">
    <property type="entry name" value="Ribosomal_L11"/>
    <property type="match status" value="1"/>
</dbReference>
<dbReference type="Pfam" id="PF03946">
    <property type="entry name" value="Ribosomal_L11_N"/>
    <property type="match status" value="1"/>
</dbReference>
<dbReference type="SMART" id="SM00649">
    <property type="entry name" value="RL11"/>
    <property type="match status" value="1"/>
</dbReference>
<dbReference type="SUPFAM" id="SSF54747">
    <property type="entry name" value="Ribosomal L11/L12e N-terminal domain"/>
    <property type="match status" value="1"/>
</dbReference>
<dbReference type="SUPFAM" id="SSF46906">
    <property type="entry name" value="Ribosomal protein L11, C-terminal domain"/>
    <property type="match status" value="1"/>
</dbReference>
<dbReference type="PROSITE" id="PS00359">
    <property type="entry name" value="RIBOSOMAL_L11"/>
    <property type="match status" value="1"/>
</dbReference>